<protein>
    <recommendedName>
        <fullName evidence="1">1-deoxy-D-xylulose-5-phosphate synthase</fullName>
        <ecNumber evidence="1">2.2.1.7</ecNumber>
    </recommendedName>
    <alternativeName>
        <fullName evidence="1">1-deoxyxylulose-5-phosphate synthase</fullName>
        <shortName evidence="1">DXP synthase</shortName>
        <shortName evidence="1">DXPS</shortName>
    </alternativeName>
</protein>
<gene>
    <name evidence="1" type="primary">dxs</name>
    <name type="ordered locus">BPSS1762</name>
</gene>
<accession>Q63JF4</accession>
<organism>
    <name type="scientific">Burkholderia pseudomallei (strain K96243)</name>
    <dbReference type="NCBI Taxonomy" id="272560"/>
    <lineage>
        <taxon>Bacteria</taxon>
        <taxon>Pseudomonadati</taxon>
        <taxon>Pseudomonadota</taxon>
        <taxon>Betaproteobacteria</taxon>
        <taxon>Burkholderiales</taxon>
        <taxon>Burkholderiaceae</taxon>
        <taxon>Burkholderia</taxon>
        <taxon>pseudomallei group</taxon>
    </lineage>
</organism>
<proteinExistence type="inferred from homology"/>
<keyword id="KW-0414">Isoprene biosynthesis</keyword>
<keyword id="KW-0460">Magnesium</keyword>
<keyword id="KW-0479">Metal-binding</keyword>
<keyword id="KW-1185">Reference proteome</keyword>
<keyword id="KW-0784">Thiamine biosynthesis</keyword>
<keyword id="KW-0786">Thiamine pyrophosphate</keyword>
<keyword id="KW-0808">Transferase</keyword>
<name>DXS_BURPS</name>
<feature type="chain" id="PRO_0000256390" description="1-deoxy-D-xylulose-5-phosphate synthase">
    <location>
        <begin position="1"/>
        <end position="634"/>
    </location>
</feature>
<feature type="binding site" evidence="1">
    <location>
        <position position="74"/>
    </location>
    <ligand>
        <name>thiamine diphosphate</name>
        <dbReference type="ChEBI" id="CHEBI:58937"/>
    </ligand>
</feature>
<feature type="binding site" evidence="1">
    <location>
        <begin position="115"/>
        <end position="117"/>
    </location>
    <ligand>
        <name>thiamine diphosphate</name>
        <dbReference type="ChEBI" id="CHEBI:58937"/>
    </ligand>
</feature>
<feature type="binding site" evidence="1">
    <location>
        <position position="146"/>
    </location>
    <ligand>
        <name>Mg(2+)</name>
        <dbReference type="ChEBI" id="CHEBI:18420"/>
    </ligand>
</feature>
<feature type="binding site" evidence="1">
    <location>
        <begin position="147"/>
        <end position="148"/>
    </location>
    <ligand>
        <name>thiamine diphosphate</name>
        <dbReference type="ChEBI" id="CHEBI:58937"/>
    </ligand>
</feature>
<feature type="binding site" evidence="1">
    <location>
        <position position="176"/>
    </location>
    <ligand>
        <name>Mg(2+)</name>
        <dbReference type="ChEBI" id="CHEBI:18420"/>
    </ligand>
</feature>
<feature type="binding site" evidence="1">
    <location>
        <position position="176"/>
    </location>
    <ligand>
        <name>thiamine diphosphate</name>
        <dbReference type="ChEBI" id="CHEBI:58937"/>
    </ligand>
</feature>
<feature type="binding site" evidence="1">
    <location>
        <position position="283"/>
    </location>
    <ligand>
        <name>thiamine diphosphate</name>
        <dbReference type="ChEBI" id="CHEBI:58937"/>
    </ligand>
</feature>
<feature type="binding site" evidence="1">
    <location>
        <position position="365"/>
    </location>
    <ligand>
        <name>thiamine diphosphate</name>
        <dbReference type="ChEBI" id="CHEBI:58937"/>
    </ligand>
</feature>
<comment type="function">
    <text evidence="1">Catalyzes the acyloin condensation reaction between C atoms 2 and 3 of pyruvate and glyceraldehyde 3-phosphate to yield 1-deoxy-D-xylulose-5-phosphate (DXP).</text>
</comment>
<comment type="catalytic activity">
    <reaction evidence="1">
        <text>D-glyceraldehyde 3-phosphate + pyruvate + H(+) = 1-deoxy-D-xylulose 5-phosphate + CO2</text>
        <dbReference type="Rhea" id="RHEA:12605"/>
        <dbReference type="ChEBI" id="CHEBI:15361"/>
        <dbReference type="ChEBI" id="CHEBI:15378"/>
        <dbReference type="ChEBI" id="CHEBI:16526"/>
        <dbReference type="ChEBI" id="CHEBI:57792"/>
        <dbReference type="ChEBI" id="CHEBI:59776"/>
        <dbReference type="EC" id="2.2.1.7"/>
    </reaction>
</comment>
<comment type="cofactor">
    <cofactor evidence="1">
        <name>Mg(2+)</name>
        <dbReference type="ChEBI" id="CHEBI:18420"/>
    </cofactor>
    <text evidence="1">Binds 1 Mg(2+) ion per subunit.</text>
</comment>
<comment type="cofactor">
    <cofactor evidence="1">
        <name>thiamine diphosphate</name>
        <dbReference type="ChEBI" id="CHEBI:58937"/>
    </cofactor>
    <text evidence="1">Binds 1 thiamine pyrophosphate per subunit.</text>
</comment>
<comment type="pathway">
    <text evidence="1">Metabolic intermediate biosynthesis; 1-deoxy-D-xylulose 5-phosphate biosynthesis; 1-deoxy-D-xylulose 5-phosphate from D-glyceraldehyde 3-phosphate and pyruvate: step 1/1.</text>
</comment>
<comment type="subunit">
    <text evidence="1">Homodimer.</text>
</comment>
<comment type="similarity">
    <text evidence="1">Belongs to the transketolase family. DXPS subfamily.</text>
</comment>
<evidence type="ECO:0000255" key="1">
    <source>
        <dbReference type="HAMAP-Rule" id="MF_00315"/>
    </source>
</evidence>
<sequence length="634" mass="68281">MYDLLKTIDDPADLRRLDRRQLQPLADELRAFVLDSVSKTGGHLSSNLGTVELTIALHYVFNTPDDRIVWDVGHQTYPHKILTGRRDGMKTLRQFDGISGFPRRSESEYDTFGTAHSSTSISAALGMAIGSKLNGDDRFSIAVIGDGAMTAGMAFEAMNNAGVSEDAKLLVILNDNDMSISPPVGALNRHLARLMSGRFYAAARAGVERVLSVAPPVLELARKLEEHAKGMVVPATLFEEFGFNYIGPIDGHDLDSLIPTLQNIKELRGPQFLHVVTKKGQGYKLAEADPVLYHGPGKFNPAEGIKPSTTPAKKTYTQVFGEWLCDAAELDARVVGITPAMREGSGMVEFEKRFPERYYDVGIAEQHAVTFAGGLATEGLKPVVAIYSTFLQRAYDQLIHDVALQNLPVVFAIDRAGLVGADGATHAGAYDLAFLRCIPNMTVMAASDENECRQMLHTALQQPNPTAVRYPRGAGTGVATVKAFTEIPLGKGEVRRRTSQPDGKRIAILAFGTMVAPSLAAADALDATVANMRFVKPIDAELVQALARTHDYLVTVEEGCVMGGAGSACVEAMMESGAVRPVLQLGLPDRFVDHGDPAKLLSLCGLDGDGIAKSIRERFLSHAADVASPAKRVA</sequence>
<dbReference type="EC" id="2.2.1.7" evidence="1"/>
<dbReference type="EMBL" id="BX571966">
    <property type="protein sequence ID" value="CAH39237.1"/>
    <property type="molecule type" value="Genomic_DNA"/>
</dbReference>
<dbReference type="RefSeq" id="WP_004266656.1">
    <property type="nucleotide sequence ID" value="NZ_CP009537.1"/>
</dbReference>
<dbReference type="RefSeq" id="YP_111768.1">
    <property type="nucleotide sequence ID" value="NC_006351.1"/>
</dbReference>
<dbReference type="SMR" id="Q63JF4"/>
<dbReference type="STRING" id="272560.BPSS1762"/>
<dbReference type="GeneID" id="93063969"/>
<dbReference type="KEGG" id="bps:BPSS1762"/>
<dbReference type="PATRIC" id="fig|272560.51.peg.5193"/>
<dbReference type="eggNOG" id="COG1154">
    <property type="taxonomic scope" value="Bacteria"/>
</dbReference>
<dbReference type="UniPathway" id="UPA00064">
    <property type="reaction ID" value="UER00091"/>
</dbReference>
<dbReference type="Proteomes" id="UP000000605">
    <property type="component" value="Chromosome 2"/>
</dbReference>
<dbReference type="GO" id="GO:0005829">
    <property type="term" value="C:cytosol"/>
    <property type="evidence" value="ECO:0007669"/>
    <property type="project" value="TreeGrafter"/>
</dbReference>
<dbReference type="GO" id="GO:0008661">
    <property type="term" value="F:1-deoxy-D-xylulose-5-phosphate synthase activity"/>
    <property type="evidence" value="ECO:0007669"/>
    <property type="project" value="UniProtKB-UniRule"/>
</dbReference>
<dbReference type="GO" id="GO:0000287">
    <property type="term" value="F:magnesium ion binding"/>
    <property type="evidence" value="ECO:0007669"/>
    <property type="project" value="UniProtKB-UniRule"/>
</dbReference>
<dbReference type="GO" id="GO:0030976">
    <property type="term" value="F:thiamine pyrophosphate binding"/>
    <property type="evidence" value="ECO:0007669"/>
    <property type="project" value="UniProtKB-UniRule"/>
</dbReference>
<dbReference type="GO" id="GO:0052865">
    <property type="term" value="P:1-deoxy-D-xylulose 5-phosphate biosynthetic process"/>
    <property type="evidence" value="ECO:0007669"/>
    <property type="project" value="UniProtKB-UniPathway"/>
</dbReference>
<dbReference type="GO" id="GO:0019288">
    <property type="term" value="P:isopentenyl diphosphate biosynthetic process, methylerythritol 4-phosphate pathway"/>
    <property type="evidence" value="ECO:0007669"/>
    <property type="project" value="TreeGrafter"/>
</dbReference>
<dbReference type="GO" id="GO:0016114">
    <property type="term" value="P:terpenoid biosynthetic process"/>
    <property type="evidence" value="ECO:0007669"/>
    <property type="project" value="UniProtKB-UniRule"/>
</dbReference>
<dbReference type="GO" id="GO:0009228">
    <property type="term" value="P:thiamine biosynthetic process"/>
    <property type="evidence" value="ECO:0007669"/>
    <property type="project" value="UniProtKB-UniRule"/>
</dbReference>
<dbReference type="CDD" id="cd02007">
    <property type="entry name" value="TPP_DXS"/>
    <property type="match status" value="1"/>
</dbReference>
<dbReference type="CDD" id="cd07033">
    <property type="entry name" value="TPP_PYR_DXS_TK_like"/>
    <property type="match status" value="1"/>
</dbReference>
<dbReference type="FunFam" id="3.40.50.920:FF:000002">
    <property type="entry name" value="1-deoxy-D-xylulose-5-phosphate synthase"/>
    <property type="match status" value="1"/>
</dbReference>
<dbReference type="FunFam" id="3.40.50.970:FF:000005">
    <property type="entry name" value="1-deoxy-D-xylulose-5-phosphate synthase"/>
    <property type="match status" value="1"/>
</dbReference>
<dbReference type="Gene3D" id="3.40.50.920">
    <property type="match status" value="1"/>
</dbReference>
<dbReference type="Gene3D" id="3.40.50.970">
    <property type="match status" value="2"/>
</dbReference>
<dbReference type="HAMAP" id="MF_00315">
    <property type="entry name" value="DXP_synth"/>
    <property type="match status" value="1"/>
</dbReference>
<dbReference type="InterPro" id="IPR005477">
    <property type="entry name" value="Dxylulose-5-P_synthase"/>
</dbReference>
<dbReference type="InterPro" id="IPR029061">
    <property type="entry name" value="THDP-binding"/>
</dbReference>
<dbReference type="InterPro" id="IPR009014">
    <property type="entry name" value="Transketo_C/PFOR_II"/>
</dbReference>
<dbReference type="InterPro" id="IPR005475">
    <property type="entry name" value="Transketolase-like_Pyr-bd"/>
</dbReference>
<dbReference type="InterPro" id="IPR020826">
    <property type="entry name" value="Transketolase_BS"/>
</dbReference>
<dbReference type="InterPro" id="IPR033248">
    <property type="entry name" value="Transketolase_C"/>
</dbReference>
<dbReference type="InterPro" id="IPR049557">
    <property type="entry name" value="Transketolase_CS"/>
</dbReference>
<dbReference type="NCBIfam" id="TIGR00204">
    <property type="entry name" value="dxs"/>
    <property type="match status" value="1"/>
</dbReference>
<dbReference type="NCBIfam" id="NF003933">
    <property type="entry name" value="PRK05444.2-2"/>
    <property type="match status" value="1"/>
</dbReference>
<dbReference type="PANTHER" id="PTHR43322">
    <property type="entry name" value="1-D-DEOXYXYLULOSE 5-PHOSPHATE SYNTHASE-RELATED"/>
    <property type="match status" value="1"/>
</dbReference>
<dbReference type="PANTHER" id="PTHR43322:SF5">
    <property type="entry name" value="1-DEOXY-D-XYLULOSE-5-PHOSPHATE SYNTHASE, CHLOROPLASTIC"/>
    <property type="match status" value="1"/>
</dbReference>
<dbReference type="Pfam" id="PF13292">
    <property type="entry name" value="DXP_synthase_N"/>
    <property type="match status" value="1"/>
</dbReference>
<dbReference type="Pfam" id="PF02779">
    <property type="entry name" value="Transket_pyr"/>
    <property type="match status" value="1"/>
</dbReference>
<dbReference type="Pfam" id="PF02780">
    <property type="entry name" value="Transketolase_C"/>
    <property type="match status" value="1"/>
</dbReference>
<dbReference type="SMART" id="SM00861">
    <property type="entry name" value="Transket_pyr"/>
    <property type="match status" value="1"/>
</dbReference>
<dbReference type="SUPFAM" id="SSF52518">
    <property type="entry name" value="Thiamin diphosphate-binding fold (THDP-binding)"/>
    <property type="match status" value="2"/>
</dbReference>
<dbReference type="SUPFAM" id="SSF52922">
    <property type="entry name" value="TK C-terminal domain-like"/>
    <property type="match status" value="1"/>
</dbReference>
<dbReference type="PROSITE" id="PS00801">
    <property type="entry name" value="TRANSKETOLASE_1"/>
    <property type="match status" value="1"/>
</dbReference>
<dbReference type="PROSITE" id="PS00802">
    <property type="entry name" value="TRANSKETOLASE_2"/>
    <property type="match status" value="1"/>
</dbReference>
<reference key="1">
    <citation type="journal article" date="2004" name="Proc. Natl. Acad. Sci. U.S.A.">
        <title>Genomic plasticity of the causative agent of melioidosis, Burkholderia pseudomallei.</title>
        <authorList>
            <person name="Holden M.T.G."/>
            <person name="Titball R.W."/>
            <person name="Peacock S.J."/>
            <person name="Cerdeno-Tarraga A.-M."/>
            <person name="Atkins T."/>
            <person name="Crossman L.C."/>
            <person name="Pitt T."/>
            <person name="Churcher C."/>
            <person name="Mungall K.L."/>
            <person name="Bentley S.D."/>
            <person name="Sebaihia M."/>
            <person name="Thomson N.R."/>
            <person name="Bason N."/>
            <person name="Beacham I.R."/>
            <person name="Brooks K."/>
            <person name="Brown K.A."/>
            <person name="Brown N.F."/>
            <person name="Challis G.L."/>
            <person name="Cherevach I."/>
            <person name="Chillingworth T."/>
            <person name="Cronin A."/>
            <person name="Crossett B."/>
            <person name="Davis P."/>
            <person name="DeShazer D."/>
            <person name="Feltwell T."/>
            <person name="Fraser A."/>
            <person name="Hance Z."/>
            <person name="Hauser H."/>
            <person name="Holroyd S."/>
            <person name="Jagels K."/>
            <person name="Keith K.E."/>
            <person name="Maddison M."/>
            <person name="Moule S."/>
            <person name="Price C."/>
            <person name="Quail M.A."/>
            <person name="Rabbinowitsch E."/>
            <person name="Rutherford K."/>
            <person name="Sanders M."/>
            <person name="Simmonds M."/>
            <person name="Songsivilai S."/>
            <person name="Stevens K."/>
            <person name="Tumapa S."/>
            <person name="Vesaratchavest M."/>
            <person name="Whitehead S."/>
            <person name="Yeats C."/>
            <person name="Barrell B.G."/>
            <person name="Oyston P.C.F."/>
            <person name="Parkhill J."/>
        </authorList>
    </citation>
    <scope>NUCLEOTIDE SEQUENCE [LARGE SCALE GENOMIC DNA]</scope>
    <source>
        <strain>K96243</strain>
    </source>
</reference>